<proteinExistence type="inferred from homology"/>
<keyword id="KW-0067">ATP-binding</keyword>
<keyword id="KW-0143">Chaperone</keyword>
<keyword id="KW-0963">Cytoplasm</keyword>
<keyword id="KW-0413">Isomerase</keyword>
<keyword id="KW-0547">Nucleotide-binding</keyword>
<keyword id="KW-1185">Reference proteome</keyword>
<dbReference type="EC" id="5.6.1.7" evidence="1"/>
<dbReference type="EMBL" id="CP000271">
    <property type="protein sequence ID" value="ABE34395.1"/>
    <property type="molecule type" value="Genomic_DNA"/>
</dbReference>
<dbReference type="RefSeq" id="WP_011491723.1">
    <property type="nucleotide sequence ID" value="NC_007952.1"/>
</dbReference>
<dbReference type="SMR" id="Q13NE4"/>
<dbReference type="STRING" id="266265.Bxe_B1569"/>
<dbReference type="KEGG" id="bxb:DR64_6872"/>
<dbReference type="KEGG" id="bxe:Bxe_B1569"/>
<dbReference type="PATRIC" id="fig|266265.5.peg.6179"/>
<dbReference type="eggNOG" id="COG0459">
    <property type="taxonomic scope" value="Bacteria"/>
</dbReference>
<dbReference type="OrthoDB" id="9766614at2"/>
<dbReference type="Proteomes" id="UP000001817">
    <property type="component" value="Chromosome 2"/>
</dbReference>
<dbReference type="GO" id="GO:0005737">
    <property type="term" value="C:cytoplasm"/>
    <property type="evidence" value="ECO:0007669"/>
    <property type="project" value="UniProtKB-SubCell"/>
</dbReference>
<dbReference type="GO" id="GO:0005524">
    <property type="term" value="F:ATP binding"/>
    <property type="evidence" value="ECO:0007669"/>
    <property type="project" value="UniProtKB-UniRule"/>
</dbReference>
<dbReference type="GO" id="GO:0140662">
    <property type="term" value="F:ATP-dependent protein folding chaperone"/>
    <property type="evidence" value="ECO:0007669"/>
    <property type="project" value="InterPro"/>
</dbReference>
<dbReference type="GO" id="GO:0016853">
    <property type="term" value="F:isomerase activity"/>
    <property type="evidence" value="ECO:0007669"/>
    <property type="project" value="UniProtKB-KW"/>
</dbReference>
<dbReference type="GO" id="GO:0051082">
    <property type="term" value="F:unfolded protein binding"/>
    <property type="evidence" value="ECO:0007669"/>
    <property type="project" value="UniProtKB-UniRule"/>
</dbReference>
<dbReference type="GO" id="GO:0042026">
    <property type="term" value="P:protein refolding"/>
    <property type="evidence" value="ECO:0007669"/>
    <property type="project" value="UniProtKB-UniRule"/>
</dbReference>
<dbReference type="CDD" id="cd03344">
    <property type="entry name" value="GroEL"/>
    <property type="match status" value="1"/>
</dbReference>
<dbReference type="FunFam" id="3.50.7.10:FF:000001">
    <property type="entry name" value="60 kDa chaperonin"/>
    <property type="match status" value="1"/>
</dbReference>
<dbReference type="Gene3D" id="3.50.7.10">
    <property type="entry name" value="GroEL"/>
    <property type="match status" value="1"/>
</dbReference>
<dbReference type="Gene3D" id="1.10.560.10">
    <property type="entry name" value="GroEL-like equatorial domain"/>
    <property type="match status" value="1"/>
</dbReference>
<dbReference type="Gene3D" id="3.30.260.10">
    <property type="entry name" value="TCP-1-like chaperonin intermediate domain"/>
    <property type="match status" value="1"/>
</dbReference>
<dbReference type="HAMAP" id="MF_00600">
    <property type="entry name" value="CH60"/>
    <property type="match status" value="1"/>
</dbReference>
<dbReference type="InterPro" id="IPR018370">
    <property type="entry name" value="Chaperonin_Cpn60_CS"/>
</dbReference>
<dbReference type="InterPro" id="IPR001844">
    <property type="entry name" value="Cpn60/GroEL"/>
</dbReference>
<dbReference type="InterPro" id="IPR002423">
    <property type="entry name" value="Cpn60/GroEL/TCP-1"/>
</dbReference>
<dbReference type="InterPro" id="IPR027409">
    <property type="entry name" value="GroEL-like_apical_dom_sf"/>
</dbReference>
<dbReference type="InterPro" id="IPR027413">
    <property type="entry name" value="GROEL-like_equatorial_sf"/>
</dbReference>
<dbReference type="InterPro" id="IPR027410">
    <property type="entry name" value="TCP-1-like_intermed_sf"/>
</dbReference>
<dbReference type="NCBIfam" id="TIGR02348">
    <property type="entry name" value="GroEL"/>
    <property type="match status" value="1"/>
</dbReference>
<dbReference type="NCBIfam" id="NF000592">
    <property type="entry name" value="PRK00013.1"/>
    <property type="match status" value="1"/>
</dbReference>
<dbReference type="NCBIfam" id="NF009487">
    <property type="entry name" value="PRK12849.1"/>
    <property type="match status" value="1"/>
</dbReference>
<dbReference type="NCBIfam" id="NF009488">
    <property type="entry name" value="PRK12850.1"/>
    <property type="match status" value="1"/>
</dbReference>
<dbReference type="NCBIfam" id="NF009489">
    <property type="entry name" value="PRK12851.1"/>
    <property type="match status" value="1"/>
</dbReference>
<dbReference type="PANTHER" id="PTHR45633">
    <property type="entry name" value="60 KDA HEAT SHOCK PROTEIN, MITOCHONDRIAL"/>
    <property type="match status" value="1"/>
</dbReference>
<dbReference type="Pfam" id="PF00118">
    <property type="entry name" value="Cpn60_TCP1"/>
    <property type="match status" value="1"/>
</dbReference>
<dbReference type="PRINTS" id="PR00298">
    <property type="entry name" value="CHAPERONIN60"/>
</dbReference>
<dbReference type="SUPFAM" id="SSF52029">
    <property type="entry name" value="GroEL apical domain-like"/>
    <property type="match status" value="1"/>
</dbReference>
<dbReference type="SUPFAM" id="SSF48592">
    <property type="entry name" value="GroEL equatorial domain-like"/>
    <property type="match status" value="1"/>
</dbReference>
<dbReference type="SUPFAM" id="SSF54849">
    <property type="entry name" value="GroEL-intermediate domain like"/>
    <property type="match status" value="1"/>
</dbReference>
<dbReference type="PROSITE" id="PS00296">
    <property type="entry name" value="CHAPERONINS_CPN60"/>
    <property type="match status" value="1"/>
</dbReference>
<feature type="chain" id="PRO_0000256889" description="Chaperonin GroEL 4">
    <location>
        <begin position="1"/>
        <end position="546"/>
    </location>
</feature>
<feature type="region of interest" description="Disordered" evidence="2">
    <location>
        <begin position="524"/>
        <end position="546"/>
    </location>
</feature>
<feature type="compositionally biased region" description="Gly residues" evidence="2">
    <location>
        <begin position="533"/>
        <end position="546"/>
    </location>
</feature>
<feature type="binding site" evidence="1">
    <location>
        <begin position="30"/>
        <end position="33"/>
    </location>
    <ligand>
        <name>ATP</name>
        <dbReference type="ChEBI" id="CHEBI:30616"/>
    </ligand>
</feature>
<feature type="binding site" evidence="1">
    <location>
        <position position="51"/>
    </location>
    <ligand>
        <name>ATP</name>
        <dbReference type="ChEBI" id="CHEBI:30616"/>
    </ligand>
</feature>
<feature type="binding site" evidence="1">
    <location>
        <begin position="87"/>
        <end position="91"/>
    </location>
    <ligand>
        <name>ATP</name>
        <dbReference type="ChEBI" id="CHEBI:30616"/>
    </ligand>
</feature>
<feature type="binding site" evidence="1">
    <location>
        <position position="415"/>
    </location>
    <ligand>
        <name>ATP</name>
        <dbReference type="ChEBI" id="CHEBI:30616"/>
    </ligand>
</feature>
<feature type="binding site" evidence="1">
    <location>
        <position position="495"/>
    </location>
    <ligand>
        <name>ATP</name>
        <dbReference type="ChEBI" id="CHEBI:30616"/>
    </ligand>
</feature>
<accession>Q13NE4</accession>
<comment type="function">
    <text evidence="1">Together with its co-chaperonin GroES, plays an essential role in assisting protein folding. The GroEL-GroES system forms a nano-cage that allows encapsulation of the non-native substrate proteins and provides a physical environment optimized to promote and accelerate protein folding.</text>
</comment>
<comment type="catalytic activity">
    <reaction evidence="1">
        <text>ATP + H2O + a folded polypeptide = ADP + phosphate + an unfolded polypeptide.</text>
        <dbReference type="EC" id="5.6.1.7"/>
    </reaction>
</comment>
<comment type="subunit">
    <text evidence="1">Forms a cylinder of 14 subunits composed of two heptameric rings stacked back-to-back. Interacts with the co-chaperonin GroES.</text>
</comment>
<comment type="subcellular location">
    <subcellularLocation>
        <location evidence="1">Cytoplasm</location>
    </subcellularLocation>
</comment>
<comment type="similarity">
    <text evidence="1">Belongs to the chaperonin (HSP60) family.</text>
</comment>
<reference key="1">
    <citation type="journal article" date="2006" name="Proc. Natl. Acad. Sci. U.S.A.">
        <title>Burkholderia xenovorans LB400 harbors a multi-replicon, 9.73-Mbp genome shaped for versatility.</title>
        <authorList>
            <person name="Chain P.S.G."/>
            <person name="Denef V.J."/>
            <person name="Konstantinidis K.T."/>
            <person name="Vergez L.M."/>
            <person name="Agullo L."/>
            <person name="Reyes V.L."/>
            <person name="Hauser L."/>
            <person name="Cordova M."/>
            <person name="Gomez L."/>
            <person name="Gonzalez M."/>
            <person name="Land M."/>
            <person name="Lao V."/>
            <person name="Larimer F."/>
            <person name="LiPuma J.J."/>
            <person name="Mahenthiralingam E."/>
            <person name="Malfatti S.A."/>
            <person name="Marx C.J."/>
            <person name="Parnell J.J."/>
            <person name="Ramette A."/>
            <person name="Richardson P."/>
            <person name="Seeger M."/>
            <person name="Smith D."/>
            <person name="Spilker T."/>
            <person name="Sul W.J."/>
            <person name="Tsoi T.V."/>
            <person name="Ulrich L.E."/>
            <person name="Zhulin I.B."/>
            <person name="Tiedje J.M."/>
        </authorList>
    </citation>
    <scope>NUCLEOTIDE SEQUENCE [LARGE SCALE GENOMIC DNA]</scope>
    <source>
        <strain>LB400</strain>
    </source>
</reference>
<protein>
    <recommendedName>
        <fullName evidence="1">Chaperonin GroEL 4</fullName>
        <ecNumber evidence="1">5.6.1.7</ecNumber>
    </recommendedName>
    <alternativeName>
        <fullName evidence="1">60 kDa chaperonin 4</fullName>
    </alternativeName>
    <alternativeName>
        <fullName evidence="1">Chaperonin-60 4</fullName>
        <shortName evidence="1">Cpn60 4</shortName>
    </alternativeName>
</protein>
<name>CH604_PARXL</name>
<sequence length="546" mass="57312">MAAKEIIFSDVARSRLVEGVNILANAVKVTLGPKGRNVVLERSFGSPVVTKDGVSVAKEIELSDRVQNIGAQLVKEVASRTSDAAGDGTTTATVLAQAIVREGQKYVAAGLNPLDLKRGIDKAVIAAIEELKKISKPTTTSKEIAQVATISANGEESIGQRIAEAIDRVGKEGVITVEDGKSLDDELDVVEGLQFDRGYLSPYFINDQDKQVAVLDNPFVLLHDRKVSNIRDLLPILEQVAKAGRPLLIIAEDVEGEALATLVVNNIRGILKTVAVKAPGFGDRRKALLEDIAILTGGQVIAEETGLSLEKATLAELGQAKRIEVGKENTTVIDGAGDSKNIEARVKQIRTQIEEATSDYDREKLQERVAKLAGGVAVIKVGGATEIEVKEKKDRVDDALHATRAAVEEGIVPGGGVALIRVKQAISGLKGANADQDAGIKIVLRALEEPLRQIVTNAGEEASVVVAKVAQGTGNFGYNAQTGEYGDLVQSGVLDPTKVTRTALQNASSVAGLLLTTDATVHEAPKDTPAAGQPGGPGAGGPGLDF</sequence>
<gene>
    <name evidence="1" type="primary">groEL4</name>
    <name evidence="1" type="synonym">groL4</name>
    <name type="ordered locus">Bxeno_B1427</name>
    <name type="ORF">Bxe_B1569</name>
</gene>
<evidence type="ECO:0000255" key="1">
    <source>
        <dbReference type="HAMAP-Rule" id="MF_00600"/>
    </source>
</evidence>
<evidence type="ECO:0000256" key="2">
    <source>
        <dbReference type="SAM" id="MobiDB-lite"/>
    </source>
</evidence>
<organism>
    <name type="scientific">Paraburkholderia xenovorans (strain LB400)</name>
    <dbReference type="NCBI Taxonomy" id="266265"/>
    <lineage>
        <taxon>Bacteria</taxon>
        <taxon>Pseudomonadati</taxon>
        <taxon>Pseudomonadota</taxon>
        <taxon>Betaproteobacteria</taxon>
        <taxon>Burkholderiales</taxon>
        <taxon>Burkholderiaceae</taxon>
        <taxon>Paraburkholderia</taxon>
    </lineage>
</organism>